<dbReference type="SMR" id="P25674"/>
<dbReference type="GO" id="GO:0005576">
    <property type="term" value="C:extracellular region"/>
    <property type="evidence" value="ECO:0007669"/>
    <property type="project" value="UniProtKB-SubCell"/>
</dbReference>
<dbReference type="GO" id="GO:0030550">
    <property type="term" value="F:acetylcholine receptor inhibitor activity"/>
    <property type="evidence" value="ECO:0007669"/>
    <property type="project" value="UniProtKB-KW"/>
</dbReference>
<dbReference type="GO" id="GO:0099106">
    <property type="term" value="F:ion channel regulator activity"/>
    <property type="evidence" value="ECO:0007669"/>
    <property type="project" value="UniProtKB-KW"/>
</dbReference>
<dbReference type="GO" id="GO:0090729">
    <property type="term" value="F:toxin activity"/>
    <property type="evidence" value="ECO:0007669"/>
    <property type="project" value="UniProtKB-KW"/>
</dbReference>
<dbReference type="CDD" id="cd00206">
    <property type="entry name" value="TFP_snake_toxin"/>
    <property type="match status" value="1"/>
</dbReference>
<dbReference type="Gene3D" id="2.10.60.10">
    <property type="entry name" value="CD59"/>
    <property type="match status" value="1"/>
</dbReference>
<dbReference type="InterPro" id="IPR003571">
    <property type="entry name" value="Snake_3FTx"/>
</dbReference>
<dbReference type="InterPro" id="IPR045860">
    <property type="entry name" value="Snake_toxin-like_sf"/>
</dbReference>
<dbReference type="InterPro" id="IPR018354">
    <property type="entry name" value="Snake_toxin_con_site"/>
</dbReference>
<dbReference type="InterPro" id="IPR054131">
    <property type="entry name" value="Toxin_cobra-type"/>
</dbReference>
<dbReference type="Pfam" id="PF21947">
    <property type="entry name" value="Toxin_cobra-type"/>
    <property type="match status" value="1"/>
</dbReference>
<dbReference type="SUPFAM" id="SSF57302">
    <property type="entry name" value="Snake toxin-like"/>
    <property type="match status" value="1"/>
</dbReference>
<dbReference type="PROSITE" id="PS00272">
    <property type="entry name" value="SNAKE_TOXIN"/>
    <property type="match status" value="1"/>
</dbReference>
<keyword id="KW-0008">Acetylcholine receptor inhibiting toxin</keyword>
<keyword id="KW-0903">Direct protein sequencing</keyword>
<keyword id="KW-1015">Disulfide bond</keyword>
<keyword id="KW-0872">Ion channel impairing toxin</keyword>
<keyword id="KW-0528">Neurotoxin</keyword>
<keyword id="KW-0629">Postsynaptic neurotoxin</keyword>
<keyword id="KW-0964">Secreted</keyword>
<keyword id="KW-0800">Toxin</keyword>
<sequence length="71" mass="7821">IRCFITPDVTSQACPDGHVCYTKMWCDNFCGMRGKRVDLGCAATCPTVKPGVDIKCCSTDNCNPFPTRKRS</sequence>
<evidence type="ECO:0000250" key="1">
    <source>
        <dbReference type="UniProtKB" id="P25671"/>
    </source>
</evidence>
<evidence type="ECO:0000250" key="2">
    <source>
        <dbReference type="UniProtKB" id="P60615"/>
    </source>
</evidence>
<evidence type="ECO:0000269" key="3">
    <source>
    </source>
</evidence>
<evidence type="ECO:0000303" key="4">
    <source>
    </source>
</evidence>
<evidence type="ECO:0000305" key="5"/>
<evidence type="ECO:0000305" key="6">
    <source>
    </source>
</evidence>
<organism>
    <name type="scientific">Naja haje haje</name>
    <name type="common">Egyptian cobra</name>
    <dbReference type="NCBI Taxonomy" id="8642"/>
    <lineage>
        <taxon>Eukaryota</taxon>
        <taxon>Metazoa</taxon>
        <taxon>Chordata</taxon>
        <taxon>Craniata</taxon>
        <taxon>Vertebrata</taxon>
        <taxon>Euteleostomi</taxon>
        <taxon>Lepidosauria</taxon>
        <taxon>Squamata</taxon>
        <taxon>Bifurcata</taxon>
        <taxon>Unidentata</taxon>
        <taxon>Episquamata</taxon>
        <taxon>Toxicofera</taxon>
        <taxon>Serpentes</taxon>
        <taxon>Colubroidea</taxon>
        <taxon>Elapidae</taxon>
        <taxon>Elapinae</taxon>
        <taxon>Naja</taxon>
    </lineage>
</organism>
<comment type="function">
    <text evidence="2">Binds with high affinity to muscular (alpha-1/CHRNA1) and neuronal (alpha-7/CHRNA7) nicotinic acetylcholine receptor (nAChR) and inhibits acetylcholine from binding to the receptor, thereby impairing neuromuscular and neuronal transmission.</text>
</comment>
<comment type="subcellular location">
    <subcellularLocation>
        <location evidence="3">Secreted</location>
    </subcellularLocation>
</comment>
<comment type="tissue specificity">
    <text evidence="6">Expressed by the venom gland.</text>
</comment>
<comment type="toxic dose">
    <text evidence="3">LD(50) is 0.11 mg/kg by intravenous injection.</text>
</comment>
<comment type="similarity">
    <text evidence="5">Belongs to the three-finger toxin family. Long-chain subfamily. Type II alpha-neurotoxin sub-subfamily.</text>
</comment>
<protein>
    <recommendedName>
        <fullName>Long neurotoxin 1</fullName>
    </recommendedName>
    <alternativeName>
        <fullName evidence="4">Toxin CM-5</fullName>
    </alternativeName>
</protein>
<name>3L21_NAJHH</name>
<feature type="chain" id="PRO_0000093544" description="Long neurotoxin 1" evidence="3">
    <location>
        <begin position="1"/>
        <end position="71"/>
    </location>
</feature>
<feature type="disulfide bond" evidence="1">
    <location>
        <begin position="3"/>
        <end position="20"/>
    </location>
</feature>
<feature type="disulfide bond" evidence="1">
    <location>
        <begin position="14"/>
        <end position="41"/>
    </location>
</feature>
<feature type="disulfide bond" evidence="1">
    <location>
        <begin position="26"/>
        <end position="30"/>
    </location>
</feature>
<feature type="disulfide bond" evidence="1">
    <location>
        <begin position="45"/>
        <end position="56"/>
    </location>
</feature>
<feature type="disulfide bond" evidence="1">
    <location>
        <begin position="57"/>
        <end position="62"/>
    </location>
</feature>
<proteinExistence type="evidence at protein level"/>
<reference key="1">
    <citation type="journal article" date="1978" name="Biochim. Biophys. Acta">
        <title>Purification, some properties and the primary structures of three reduced and S-carboxymethylated toxins (CM-5, CM-6 and CM-10a) from Naja haje haje (Egyptian cobra) venom.</title>
        <authorList>
            <person name="Joubert F.J."/>
            <person name="Taljaard N."/>
        </authorList>
    </citation>
    <scope>PROTEIN SEQUENCE</scope>
    <scope>TOXIC DOSE</scope>
    <scope>SUBCELLULAR LOCATION</scope>
    <source>
        <tissue>Venom</tissue>
    </source>
</reference>
<accession>P25674</accession>